<protein>
    <recommendedName>
        <fullName evidence="5">Autophagy-related protein 9A</fullName>
    </recommendedName>
    <alternativeName>
        <fullName evidence="2">APG9-like 1</fullName>
    </alternativeName>
</protein>
<keyword id="KW-0007">Acetylation</keyword>
<keyword id="KW-0072">Autophagy</keyword>
<keyword id="KW-0968">Cytoplasmic vesicle</keyword>
<keyword id="KW-0256">Endoplasmic reticulum</keyword>
<keyword id="KW-0967">Endosome</keyword>
<keyword id="KW-0325">Glycoprotein</keyword>
<keyword id="KW-0333">Golgi apparatus</keyword>
<keyword id="KW-0445">Lipid transport</keyword>
<keyword id="KW-0472">Membrane</keyword>
<keyword id="KW-0496">Mitochondrion</keyword>
<keyword id="KW-0597">Phosphoprotein</keyword>
<keyword id="KW-1185">Reference proteome</keyword>
<keyword id="KW-0812">Transmembrane</keyword>
<keyword id="KW-1133">Transmembrane helix</keyword>
<keyword id="KW-0813">Transport</keyword>
<keyword id="KW-0832">Ubl conjugation</keyword>
<dbReference type="EMBL" id="BC089204">
    <property type="protein sequence ID" value="AAH89204.1"/>
    <property type="molecule type" value="mRNA"/>
</dbReference>
<dbReference type="RefSeq" id="NP_001014240.1">
    <property type="nucleotide sequence ID" value="NM_001014218.2"/>
</dbReference>
<dbReference type="RefSeq" id="NP_001380809.1">
    <property type="nucleotide sequence ID" value="NM_001393880.1"/>
</dbReference>
<dbReference type="RefSeq" id="NP_001380810.1">
    <property type="nucleotide sequence ID" value="NM_001393881.1"/>
</dbReference>
<dbReference type="RefSeq" id="XP_006245309.1">
    <property type="nucleotide sequence ID" value="XM_006245247.3"/>
</dbReference>
<dbReference type="RefSeq" id="XP_008765486.1">
    <property type="nucleotide sequence ID" value="XM_008767264.2"/>
</dbReference>
<dbReference type="RefSeq" id="XP_008765487.1">
    <property type="nucleotide sequence ID" value="XM_008767265.2"/>
</dbReference>
<dbReference type="RefSeq" id="XP_008765488.1">
    <property type="nucleotide sequence ID" value="XM_008767266.2"/>
</dbReference>
<dbReference type="RefSeq" id="XP_063123475.1">
    <property type="nucleotide sequence ID" value="XM_063267405.1"/>
</dbReference>
<dbReference type="RefSeq" id="XP_063123476.1">
    <property type="nucleotide sequence ID" value="XM_063267406.1"/>
</dbReference>
<dbReference type="RefSeq" id="XP_063123477.1">
    <property type="nucleotide sequence ID" value="XM_063267407.1"/>
</dbReference>
<dbReference type="RefSeq" id="XP_063123479.1">
    <property type="nucleotide sequence ID" value="XM_063267409.1"/>
</dbReference>
<dbReference type="SMR" id="Q5FWU3"/>
<dbReference type="FunCoup" id="Q5FWU3">
    <property type="interactions" value="2985"/>
</dbReference>
<dbReference type="STRING" id="10116.ENSRNOP00000025740"/>
<dbReference type="GlyCosmos" id="Q5FWU3">
    <property type="glycosylation" value="1 site, No reported glycans"/>
</dbReference>
<dbReference type="GlyGen" id="Q5FWU3">
    <property type="glycosylation" value="1 site"/>
</dbReference>
<dbReference type="iPTMnet" id="Q5FWU3"/>
<dbReference type="PhosphoSitePlus" id="Q5FWU3"/>
<dbReference type="jPOST" id="Q5FWU3"/>
<dbReference type="PaxDb" id="10116-ENSRNOP00000025740"/>
<dbReference type="Ensembl" id="ENSRNOT00000025740.6">
    <property type="protein sequence ID" value="ENSRNOP00000025740.5"/>
    <property type="gene ID" value="ENSRNOG00000018975.7"/>
</dbReference>
<dbReference type="GeneID" id="363254"/>
<dbReference type="KEGG" id="rno:363254"/>
<dbReference type="UCSC" id="RGD:1310450">
    <property type="organism name" value="rat"/>
</dbReference>
<dbReference type="AGR" id="RGD:1310450"/>
<dbReference type="CTD" id="79065"/>
<dbReference type="RGD" id="1310450">
    <property type="gene designation" value="Atg9a"/>
</dbReference>
<dbReference type="eggNOG" id="KOG2173">
    <property type="taxonomic scope" value="Eukaryota"/>
</dbReference>
<dbReference type="GeneTree" id="ENSGT00390000014839"/>
<dbReference type="HOGENOM" id="CLU_006200_2_1_1"/>
<dbReference type="InParanoid" id="Q5FWU3"/>
<dbReference type="PhylomeDB" id="Q5FWU3"/>
<dbReference type="TreeFam" id="TF313665"/>
<dbReference type="Reactome" id="R-RNO-1632852">
    <property type="pathway name" value="Macroautophagy"/>
</dbReference>
<dbReference type="Reactome" id="R-RNO-5205685">
    <property type="pathway name" value="PINK1-PRKN Mediated Mitophagy"/>
</dbReference>
<dbReference type="PRO" id="PR:Q5FWU3"/>
<dbReference type="Proteomes" id="UP000002494">
    <property type="component" value="Chromosome 9"/>
</dbReference>
<dbReference type="Bgee" id="ENSRNOG00000018975">
    <property type="expression patterns" value="Expressed in skeletal muscle tissue and 19 other cell types or tissues"/>
</dbReference>
<dbReference type="GO" id="GO:0005776">
    <property type="term" value="C:autophagosome"/>
    <property type="evidence" value="ECO:0000266"/>
    <property type="project" value="RGD"/>
</dbReference>
<dbReference type="GO" id="GO:0005737">
    <property type="term" value="C:cytoplasm"/>
    <property type="evidence" value="ECO:0000266"/>
    <property type="project" value="RGD"/>
</dbReference>
<dbReference type="GO" id="GO:0005789">
    <property type="term" value="C:endoplasmic reticulum membrane"/>
    <property type="evidence" value="ECO:0000250"/>
    <property type="project" value="UniProtKB"/>
</dbReference>
<dbReference type="GO" id="GO:0005768">
    <property type="term" value="C:endosome"/>
    <property type="evidence" value="ECO:0000266"/>
    <property type="project" value="RGD"/>
</dbReference>
<dbReference type="GO" id="GO:0005794">
    <property type="term" value="C:Golgi apparatus"/>
    <property type="evidence" value="ECO:0000250"/>
    <property type="project" value="UniProtKB"/>
</dbReference>
<dbReference type="GO" id="GO:0000139">
    <property type="term" value="C:Golgi membrane"/>
    <property type="evidence" value="ECO:0000250"/>
    <property type="project" value="UniProtKB"/>
</dbReference>
<dbReference type="GO" id="GO:0005770">
    <property type="term" value="C:late endosome"/>
    <property type="evidence" value="ECO:0000314"/>
    <property type="project" value="RGD"/>
</dbReference>
<dbReference type="GO" id="GO:0031902">
    <property type="term" value="C:late endosome membrane"/>
    <property type="evidence" value="ECO:0007669"/>
    <property type="project" value="UniProtKB-SubCell"/>
</dbReference>
<dbReference type="GO" id="GO:0031966">
    <property type="term" value="C:mitochondrial membrane"/>
    <property type="evidence" value="ECO:0007669"/>
    <property type="project" value="UniProtKB-SubCell"/>
</dbReference>
<dbReference type="GO" id="GO:0005739">
    <property type="term" value="C:mitochondrion"/>
    <property type="evidence" value="ECO:0000250"/>
    <property type="project" value="UniProtKB"/>
</dbReference>
<dbReference type="GO" id="GO:0000407">
    <property type="term" value="C:phagophore assembly site"/>
    <property type="evidence" value="ECO:0000266"/>
    <property type="project" value="RGD"/>
</dbReference>
<dbReference type="GO" id="GO:0034045">
    <property type="term" value="C:phagophore assembly site membrane"/>
    <property type="evidence" value="ECO:0007669"/>
    <property type="project" value="UniProtKB-SubCell"/>
</dbReference>
<dbReference type="GO" id="GO:0055037">
    <property type="term" value="C:recycling endosome"/>
    <property type="evidence" value="ECO:0000266"/>
    <property type="project" value="RGD"/>
</dbReference>
<dbReference type="GO" id="GO:0055038">
    <property type="term" value="C:recycling endosome membrane"/>
    <property type="evidence" value="ECO:0000250"/>
    <property type="project" value="UniProtKB"/>
</dbReference>
<dbReference type="GO" id="GO:0097060">
    <property type="term" value="C:synaptic membrane"/>
    <property type="evidence" value="ECO:0000266"/>
    <property type="project" value="RGD"/>
</dbReference>
<dbReference type="GO" id="GO:0008021">
    <property type="term" value="C:synaptic vesicle"/>
    <property type="evidence" value="ECO:0000314"/>
    <property type="project" value="SynGO"/>
</dbReference>
<dbReference type="GO" id="GO:0005802">
    <property type="term" value="C:trans-Golgi network"/>
    <property type="evidence" value="ECO:0000250"/>
    <property type="project" value="UniProtKB"/>
</dbReference>
<dbReference type="GO" id="GO:0017128">
    <property type="term" value="F:phospholipid scramblase activity"/>
    <property type="evidence" value="ECO:0000250"/>
    <property type="project" value="UniProtKB"/>
</dbReference>
<dbReference type="GO" id="GO:0000045">
    <property type="term" value="P:autophagosome assembly"/>
    <property type="evidence" value="ECO:0000250"/>
    <property type="project" value="UniProtKB"/>
</dbReference>
<dbReference type="GO" id="GO:0006914">
    <property type="term" value="P:autophagy"/>
    <property type="evidence" value="ECO:0000266"/>
    <property type="project" value="RGD"/>
</dbReference>
<dbReference type="GO" id="GO:0060349">
    <property type="term" value="P:bone morphogenesis"/>
    <property type="evidence" value="ECO:0000250"/>
    <property type="project" value="UniProtKB"/>
</dbReference>
<dbReference type="GO" id="GO:0045087">
    <property type="term" value="P:innate immune response"/>
    <property type="evidence" value="ECO:0000266"/>
    <property type="project" value="RGD"/>
</dbReference>
<dbReference type="GO" id="GO:0000423">
    <property type="term" value="P:mitophagy"/>
    <property type="evidence" value="ECO:0000318"/>
    <property type="project" value="GO_Central"/>
</dbReference>
<dbReference type="GO" id="GO:0032688">
    <property type="term" value="P:negative regulation of interferon-beta production"/>
    <property type="evidence" value="ECO:0000266"/>
    <property type="project" value="RGD"/>
</dbReference>
<dbReference type="GO" id="GO:0010936">
    <property type="term" value="P:negative regulation of macrophage cytokine production"/>
    <property type="evidence" value="ECO:0000266"/>
    <property type="project" value="RGD"/>
</dbReference>
<dbReference type="GO" id="GO:0034727">
    <property type="term" value="P:piecemeal microautophagy of the nucleus"/>
    <property type="evidence" value="ECO:0000318"/>
    <property type="project" value="GO_Central"/>
</dbReference>
<dbReference type="GO" id="GO:0097300">
    <property type="term" value="P:programmed necrotic cell death"/>
    <property type="evidence" value="ECO:0000250"/>
    <property type="project" value="UniProtKB"/>
</dbReference>
<dbReference type="GO" id="GO:0034067">
    <property type="term" value="P:protein localization to Golgi apparatus"/>
    <property type="evidence" value="ECO:0000266"/>
    <property type="project" value="RGD"/>
</dbReference>
<dbReference type="GO" id="GO:0034497">
    <property type="term" value="P:protein localization to phagophore assembly site"/>
    <property type="evidence" value="ECO:0000318"/>
    <property type="project" value="GO_Central"/>
</dbReference>
<dbReference type="GO" id="GO:0031667">
    <property type="term" value="P:response to nutrient levels"/>
    <property type="evidence" value="ECO:0000270"/>
    <property type="project" value="RGD"/>
</dbReference>
<dbReference type="GO" id="GO:0061709">
    <property type="term" value="P:reticulophagy"/>
    <property type="evidence" value="ECO:0000318"/>
    <property type="project" value="GO_Central"/>
</dbReference>
<dbReference type="InterPro" id="IPR007241">
    <property type="entry name" value="Autophagy-rel_prot_9"/>
</dbReference>
<dbReference type="PANTHER" id="PTHR13038">
    <property type="entry name" value="APG9 AUTOPHAGY 9"/>
    <property type="match status" value="1"/>
</dbReference>
<dbReference type="PANTHER" id="PTHR13038:SF13">
    <property type="entry name" value="AUTOPHAGY-RELATED PROTEIN 9A"/>
    <property type="match status" value="1"/>
</dbReference>
<dbReference type="Pfam" id="PF04109">
    <property type="entry name" value="ATG9"/>
    <property type="match status" value="1"/>
</dbReference>
<reference key="1">
    <citation type="journal article" date="2004" name="Genome Res.">
        <title>The status, quality, and expansion of the NIH full-length cDNA project: the Mammalian Gene Collection (MGC).</title>
        <authorList>
            <consortium name="The MGC Project Team"/>
        </authorList>
    </citation>
    <scope>NUCLEOTIDE SEQUENCE [LARGE SCALE MRNA]</scope>
    <source>
        <tissue>Heart</tissue>
    </source>
</reference>
<reference key="2">
    <citation type="journal article" date="2012" name="Nat. Commun.">
        <title>Quantitative maps of protein phosphorylation sites across 14 different rat organs and tissues.</title>
        <authorList>
            <person name="Lundby A."/>
            <person name="Secher A."/>
            <person name="Lage K."/>
            <person name="Nordsborg N.B."/>
            <person name="Dmytriyev A."/>
            <person name="Lundby C."/>
            <person name="Olsen J.V."/>
        </authorList>
    </citation>
    <scope>PHOSPHORYLATION [LARGE SCALE ANALYSIS] AT SER-16; SER-18; SER-656; SER-735; SER-738; SER-741 AND SER-828</scope>
    <scope>IDENTIFICATION BY MASS SPECTROMETRY [LARGE SCALE ANALYSIS]</scope>
</reference>
<comment type="function">
    <text evidence="1 2">Phospholipid scramblase involved in autophagy by mediating autophagosomal membrane expansion. Cycles between the preautophagosomal structure/phagophore assembly site (PAS) and the cytoplasmic vesicle pool and supplies membrane for the growing autophagosome. Lipid scramblase activity plays a key role in preautophagosomal structure/phagophore assembly by distributing the phospholipids that arrive through ATG2 (ATG2A or ATG2B) from the cytoplasmic to the luminal leaflet of the bilayer, thereby driving autophagosomal membrane expansion. Also required to supply phosphatidylinositol 4-phosphate to the autophagosome initiation site by recruiting the phosphatidylinositol 4-kinase beta (PI4KB) in a process dependent on ARFIP2, but not ARFIP1 (By similarity). In addition to autophagy, also plays a role in necrotic cell death (By similarity).</text>
</comment>
<comment type="catalytic activity">
    <reaction evidence="2">
        <text>a 1,2-diacyl-sn-glycero-3-phosphocholine(in) = a 1,2-diacyl-sn-glycero-3-phosphocholine(out)</text>
        <dbReference type="Rhea" id="RHEA:38571"/>
        <dbReference type="ChEBI" id="CHEBI:57643"/>
    </reaction>
</comment>
<comment type="catalytic activity">
    <reaction evidence="2">
        <text>a 1,2-diacyl-sn-glycero-3-phospho-L-serine(in) = a 1,2-diacyl-sn-glycero-3-phospho-L-serine(out)</text>
        <dbReference type="Rhea" id="RHEA:38663"/>
        <dbReference type="ChEBI" id="CHEBI:57262"/>
    </reaction>
</comment>
<comment type="catalytic activity">
    <reaction evidence="2">
        <text>a 1,2-diacyl-sn-glycero-3-phosphoethanolamine(in) = a 1,2-diacyl-sn-glycero-3-phosphoethanolamine(out)</text>
        <dbReference type="Rhea" id="RHEA:38895"/>
        <dbReference type="ChEBI" id="CHEBI:64612"/>
    </reaction>
</comment>
<comment type="subunit">
    <text evidence="2">Homotrimer; forms a homotrimer with a central pore that forms a path between the two membrane leaflets. Interacts (via cytoplasmic its C-terminus) with ATG2A. Interacts with SUPT20H. Interacts (via the tyrosine-based sorting signal motif) with AP4M1; promoting association with the AP-4 complex. Interacts with ARFIP1 and ARFIP2. Interacts with PI4K2A and PI4KB. Interacts with ATG4A; the interaction is direct and promotes ATG9A trafficking.</text>
</comment>
<comment type="subcellular location">
    <subcellularLocation>
        <location evidence="2">Preautophagosomal structure membrane</location>
        <topology evidence="2">Multi-pass membrane protein</topology>
    </subcellularLocation>
    <subcellularLocation>
        <location evidence="2">Cytoplasmic vesicle</location>
        <location evidence="2">Autophagosome membrane</location>
        <topology evidence="2">Multi-pass membrane protein</topology>
    </subcellularLocation>
    <subcellularLocation>
        <location evidence="2">Golgi apparatus</location>
        <location evidence="2">trans-Golgi network membrane</location>
        <topology evidence="2">Multi-pass membrane protein</topology>
    </subcellularLocation>
    <subcellularLocation>
        <location evidence="2">Late endosome membrane</location>
        <topology evidence="2">Multi-pass membrane protein</topology>
    </subcellularLocation>
    <subcellularLocation>
        <location evidence="2">Recycling endosome membrane</location>
        <topology evidence="2">Multi-pass membrane protein</topology>
    </subcellularLocation>
    <subcellularLocation>
        <location evidence="2">Endoplasmic reticulum membrane</location>
        <topology evidence="2">Multi-pass membrane protein</topology>
    </subcellularLocation>
    <subcellularLocation>
        <location evidence="2">Mitochondrion membrane</location>
        <topology evidence="3">Multi-pass membrane protein</topology>
    </subcellularLocation>
    <text evidence="2">Mainly localizes to the trans-Golgi network (TGN) and the endosomal system; cycles between them though vesicle trafficking. Export from the TGN to promote formation of autophagosomes is mediated by the AP-4 complex. Under amino acid starvation or rapamycin treatment, redistributes to preautophagosomal structure/phagophore assembly site (PAS). The starvation-induced redistribution depends on ULK1, ATG13, as well as SH3GLB1. Upon autophagy induction, a small portion transiently localizes to the autophagic membranes. Recruited to damaged mitochondria during mitophagy in a RIMOC1-dependent manner.</text>
</comment>
<comment type="domain">
    <text evidence="2">Forms a homotrimer with a solvated central pore, which is connected laterally to the cytosol through the cavity within each protomer. Acts as a lipid scramblase that uses its central pore to function: the central pore opens laterally to accommodate lipid headgroups, thereby enabling lipid flipping and redistribution of lipids added to the outer leaflet of ATG9A-containing vesicles, thereby enabling growth into autophagosomes.</text>
</comment>
<comment type="domain">
    <text evidence="2">The tyrosine-based sorting signal motif, also named YXX-psi motif, promotes interaction with the AP-4 complex.</text>
</comment>
<comment type="PTM">
    <text evidence="1">Ufmylated in a DDRGK1 dependent manner.</text>
</comment>
<comment type="similarity">
    <text evidence="5">Belongs to the ATG9 family.</text>
</comment>
<feature type="initiator methionine" description="Removed" evidence="2">
    <location>
        <position position="1"/>
    </location>
</feature>
<feature type="chain" id="PRO_0000119823" description="Autophagy-related protein 9A">
    <location>
        <begin position="2"/>
        <end position="839"/>
    </location>
</feature>
<feature type="topological domain" description="Cytoplasmic" evidence="5">
    <location>
        <begin position="2"/>
        <end position="61"/>
    </location>
</feature>
<feature type="transmembrane region" description="Helical" evidence="2">
    <location>
        <begin position="62"/>
        <end position="84"/>
    </location>
</feature>
<feature type="topological domain" description="Lumenal" evidence="5">
    <location>
        <begin position="85"/>
        <end position="128"/>
    </location>
</feature>
<feature type="transmembrane region" description="Helical" evidence="2">
    <location>
        <begin position="129"/>
        <end position="154"/>
    </location>
</feature>
<feature type="topological domain" description="Cytoplasmic" evidence="5">
    <location>
        <begin position="155"/>
        <end position="290"/>
    </location>
</feature>
<feature type="intramembrane region" evidence="2">
    <location>
        <begin position="291"/>
        <end position="301"/>
    </location>
</feature>
<feature type="topological domain" description="Cytoplasmic" evidence="5">
    <location>
        <begin position="302"/>
        <end position="319"/>
    </location>
</feature>
<feature type="intramembrane region" evidence="2">
    <location>
        <begin position="320"/>
        <end position="328"/>
    </location>
</feature>
<feature type="topological domain" description="Cytoplasmic" evidence="5">
    <location>
        <begin position="329"/>
        <end position="371"/>
    </location>
</feature>
<feature type="transmembrane region" description="Helical" evidence="2">
    <location>
        <begin position="372"/>
        <end position="397"/>
    </location>
</feature>
<feature type="topological domain" description="Lumenal" evidence="5">
    <location>
        <begin position="398"/>
        <end position="406"/>
    </location>
</feature>
<feature type="transmembrane region" description="Helical" evidence="2">
    <location>
        <begin position="407"/>
        <end position="424"/>
    </location>
</feature>
<feature type="topological domain" description="Cytoplasmic" evidence="5">
    <location>
        <begin position="425"/>
        <end position="470"/>
    </location>
</feature>
<feature type="intramembrane region" evidence="2">
    <location>
        <begin position="471"/>
        <end position="480"/>
    </location>
</feature>
<feature type="topological domain" description="Cytoplasmic" evidence="5">
    <location>
        <begin position="481"/>
        <end position="483"/>
    </location>
</feature>
<feature type="intramembrane region" evidence="2">
    <location>
        <begin position="484"/>
        <end position="492"/>
    </location>
</feature>
<feature type="topological domain" description="Cytoplasmic" evidence="5">
    <location>
        <begin position="493"/>
        <end position="839"/>
    </location>
</feature>
<feature type="region of interest" description="Disordered" evidence="4">
    <location>
        <begin position="656"/>
        <end position="689"/>
    </location>
</feature>
<feature type="region of interest" description="Disordered" evidence="4">
    <location>
        <begin position="717"/>
        <end position="839"/>
    </location>
</feature>
<feature type="short sequence motif" description="Tyrosine-based sorting signal" evidence="2">
    <location>
        <begin position="8"/>
        <end position="11"/>
    </location>
</feature>
<feature type="compositionally biased region" description="Basic and acidic residues" evidence="4">
    <location>
        <begin position="724"/>
        <end position="736"/>
    </location>
</feature>
<feature type="compositionally biased region" description="Acidic residues" evidence="4">
    <location>
        <begin position="737"/>
        <end position="747"/>
    </location>
</feature>
<feature type="compositionally biased region" description="Acidic residues" evidence="4">
    <location>
        <begin position="823"/>
        <end position="832"/>
    </location>
</feature>
<feature type="modified residue" description="N-acetylalanine" evidence="2">
    <location>
        <position position="2"/>
    </location>
</feature>
<feature type="modified residue" description="Phosphoserine" evidence="2">
    <location>
        <position position="14"/>
    </location>
</feature>
<feature type="modified residue" description="Phosphoserine" evidence="7">
    <location>
        <position position="16"/>
    </location>
</feature>
<feature type="modified residue" description="Phosphoserine" evidence="7">
    <location>
        <position position="18"/>
    </location>
</feature>
<feature type="modified residue" description="Phosphoserine" evidence="7">
    <location>
        <position position="656"/>
    </location>
</feature>
<feature type="modified residue" description="Phosphoserine" evidence="7">
    <location>
        <position position="735"/>
    </location>
</feature>
<feature type="modified residue" description="Phosphoserine" evidence="7">
    <location>
        <position position="738"/>
    </location>
</feature>
<feature type="modified residue" description="Phosphoserine" evidence="7">
    <location>
        <position position="741"/>
    </location>
</feature>
<feature type="modified residue" description="Phosphoserine" evidence="7">
    <location>
        <position position="828"/>
    </location>
</feature>
<feature type="glycosylation site" description="N-linked (GlcNAc...) asparagine" evidence="3">
    <location>
        <position position="99"/>
    </location>
</feature>
<proteinExistence type="evidence at protein level"/>
<accession>Q5FWU3</accession>
<sequence>MAQFDTEYQRLEASYSDSPPGEEDLLVHVAEGSKSPWHHIENLDLFFSRVYNLHQKNGFTCMLIGEIFELMQFLFVVAFTTFLVSCVDYDILFANKMVNHSLHPTEPVKVTLPDAFLPAQVCSARIQENGSLITILVIAGVFWIHRLIKFIYNICCYWEIHSFYLHALRIPMSALPYCTWQEVQARIVQTQKEHQICIHKRELTELDIYHRILRFQNYMVALVNKSLLPLRFRLPGLGEVVFFTRGLKYNFELILFWGPGSLFLNEWSLKAEYKRGGQRLELAQRLSNRILWIGIANFLLCPLILIWQILYAFFSYAEVLKREPGALGARCWSLYGRCYLRHFNELEHELQSRLNRGYKPASKYMNCFLSPLLTLLAKNGAFFAGSILAVLIALTIYDEDVLAVEHVLTTVTLLGVTVTVCRSFIPDQHMVFCPEQLLRVILAHIHYMPDHWQGNAHRSQTRDEFAQLFQYKAVFILEELLSPIVTPLILIFCLRPRALEIIDFFRNFTVEVVGVGDTCSFAQMDVRQHGHPQWLSGGQTEASVYQQAEDGKTELSLMHFAITNPGWQPPRESTAFLGFLKEQVQRDGAAAGLAQGGLLPENALFTSIQSLQSESEPLSLIANVVAGSSCRGPPLSRDLQGSRHRADVASALRSFSPLQPGQAPQGRVPSTMTGSGVDARTASSGSSVWEGQLQSLVLSEYASTEMSLHALYMHQLHKQQTQAEPERHVWHRRESDESGESAPEEGGEGARAPQPIPRSASYPCATPRPGAPETTALHGGFQRRYGGITDPGTVPRAPSHFSRLPLGGWAEDGQPASRHPEPVPEEGSEDELPPQVHKV</sequence>
<name>ATG9A_RAT</name>
<gene>
    <name evidence="6" type="primary">Atg9a</name>
    <name evidence="2" type="synonym">Apg9l1</name>
</gene>
<evidence type="ECO:0000250" key="1">
    <source>
        <dbReference type="UniProtKB" id="Q68FE2"/>
    </source>
</evidence>
<evidence type="ECO:0000250" key="2">
    <source>
        <dbReference type="UniProtKB" id="Q7Z3C6"/>
    </source>
</evidence>
<evidence type="ECO:0000255" key="3"/>
<evidence type="ECO:0000256" key="4">
    <source>
        <dbReference type="SAM" id="MobiDB-lite"/>
    </source>
</evidence>
<evidence type="ECO:0000305" key="5"/>
<evidence type="ECO:0000312" key="6">
    <source>
        <dbReference type="RGD" id="1310450"/>
    </source>
</evidence>
<evidence type="ECO:0007744" key="7">
    <source>
    </source>
</evidence>
<organism>
    <name type="scientific">Rattus norvegicus</name>
    <name type="common">Rat</name>
    <dbReference type="NCBI Taxonomy" id="10116"/>
    <lineage>
        <taxon>Eukaryota</taxon>
        <taxon>Metazoa</taxon>
        <taxon>Chordata</taxon>
        <taxon>Craniata</taxon>
        <taxon>Vertebrata</taxon>
        <taxon>Euteleostomi</taxon>
        <taxon>Mammalia</taxon>
        <taxon>Eutheria</taxon>
        <taxon>Euarchontoglires</taxon>
        <taxon>Glires</taxon>
        <taxon>Rodentia</taxon>
        <taxon>Myomorpha</taxon>
        <taxon>Muroidea</taxon>
        <taxon>Muridae</taxon>
        <taxon>Murinae</taxon>
        <taxon>Rattus</taxon>
    </lineage>
</organism>